<reference key="1">
    <citation type="journal article" date="1991" name="Nucleic Acids Res.">
        <title>Cloning and sequence analysis of TFE, a helix-loop-helix transcription factor able to recognize the thyroglobulin gene promoter in vitro.</title>
        <authorList>
            <person name="Damagnez V."/>
            <person name="de Recondo A.-M."/>
            <person name="Baldacci G."/>
        </authorList>
    </citation>
    <scope>NUCLEOTIDE SEQUENCE [MRNA]</scope>
    <source>
        <tissue>Thyroid</tissue>
    </source>
</reference>
<reference key="2">
    <citation type="journal article" date="1990" name="Nucleic Acids Res.">
        <title>Nucleotide sequence of a putative transcription factor recognizing the thyroglobulin promoter.</title>
        <authorList>
            <person name="Javaux F."/>
            <person name="Vassart G."/>
            <person name="Christophe D."/>
        </authorList>
    </citation>
    <scope>PRELIMINARY NUCLEOTIDE SEQUENCE</scope>
</reference>
<organism>
    <name type="scientific">Canis lupus familiaris</name>
    <name type="common">Dog</name>
    <name type="synonym">Canis familiaris</name>
    <dbReference type="NCBI Taxonomy" id="9615"/>
    <lineage>
        <taxon>Eukaryota</taxon>
        <taxon>Metazoa</taxon>
        <taxon>Chordata</taxon>
        <taxon>Craniata</taxon>
        <taxon>Vertebrata</taxon>
        <taxon>Euteleostomi</taxon>
        <taxon>Mammalia</taxon>
        <taxon>Eutheria</taxon>
        <taxon>Laurasiatheria</taxon>
        <taxon>Carnivora</taxon>
        <taxon>Caniformia</taxon>
        <taxon>Canidae</taxon>
        <taxon>Canis</taxon>
    </lineage>
</organism>
<gene>
    <name type="primary">TCF4</name>
    <name type="synonym">ITF2</name>
    <name type="synonym">TFE</name>
</gene>
<sequence>MFSPPVSSGKNGPTSLASGHFTGSNVEDRSSSGSWGNGGHPSPSRNYGDGTPYDHMTSRDLGSHDNLSPPFVNSRIQSKTERGSYSSYGRESNLQGCHQSLLGGDMDMGTPGTLSPTKPGSQYYQYSSNNPRRRPLHSSAMEVQTKKVRKVPPGLPSSVYAPSASTADYNRDSPGYPSSKPAASTFPSSFFMQDGHHSSDPWSSSSGMNQPGYGGMLGSSSHIPQSSSYCSLHPHERLSYPSHSSADINSSLPPMSTFHRSGTNHYSTSSCTPPANGTDSIMANRGSGAAGSSQTGDALGKALASIYSPDHTNNSFSSNPSTPVGSPPSLSAGTAVWSRNGGQASSSPNYEGPLHSLQSRIEDRLERLDDAIHVLRNHAVGPSTAMPGGHGDMHGIIGPSHNGAMGGLGSGYGTGLLSANRHSLMVGAHREDGVALRGSHSLVPNQVPVPQLPVQSATSPDLNPPQDPYRGMPPGLQGQSVSSGSSEIKSDDEGDENLQDTKSSEDKKLDDDKKDIKSITSNNDDEDLTPEQKAEREKERRMANNARERLRVRDINEAFKELGRMVQLHLKSDKPQTKLLILHQAVAVILSLEQQVRERNLNPKAACLKRREEEKVSSEPPPLSLAGPHPGMGDASNHMGQM</sequence>
<keyword id="KW-0010">Activator</keyword>
<keyword id="KW-0238">DNA-binding</keyword>
<keyword id="KW-0539">Nucleus</keyword>
<keyword id="KW-0597">Phosphoprotein</keyword>
<keyword id="KW-1185">Reference proteome</keyword>
<keyword id="KW-0804">Transcription</keyword>
<keyword id="KW-0805">Transcription regulation</keyword>
<evidence type="ECO:0000250" key="1"/>
<evidence type="ECO:0000250" key="2">
    <source>
        <dbReference type="UniProtKB" id="P15884"/>
    </source>
</evidence>
<evidence type="ECO:0000250" key="3">
    <source>
        <dbReference type="UniProtKB" id="Q62655"/>
    </source>
</evidence>
<evidence type="ECO:0000255" key="4">
    <source>
        <dbReference type="PROSITE-ProRule" id="PRU00981"/>
    </source>
</evidence>
<evidence type="ECO:0000256" key="5">
    <source>
        <dbReference type="SAM" id="MobiDB-lite"/>
    </source>
</evidence>
<feature type="chain" id="PRO_0000127255" description="Transcription factor 4">
    <location>
        <begin position="1"/>
        <end position="642"/>
    </location>
</feature>
<feature type="domain" description="bHLH" evidence="4">
    <location>
        <begin position="539"/>
        <end position="592"/>
    </location>
</feature>
<feature type="region of interest" description="Disordered" evidence="5">
    <location>
        <begin position="1"/>
        <end position="296"/>
    </location>
</feature>
<feature type="region of interest" description="Essential for MYOD1 inhibition" evidence="1">
    <location>
        <begin position="1"/>
        <end position="59"/>
    </location>
</feature>
<feature type="region of interest" description="Disordered" evidence="5">
    <location>
        <begin position="311"/>
        <end position="354"/>
    </location>
</feature>
<feature type="region of interest" description="Leucine-zipper">
    <location>
        <begin position="354"/>
        <end position="375"/>
    </location>
</feature>
<feature type="region of interest" description="Disordered" evidence="5">
    <location>
        <begin position="444"/>
        <end position="545"/>
    </location>
</feature>
<feature type="region of interest" description="Class A specific domain">
    <location>
        <begin position="594"/>
        <end position="617"/>
    </location>
</feature>
<feature type="region of interest" description="Disordered" evidence="5">
    <location>
        <begin position="609"/>
        <end position="642"/>
    </location>
</feature>
<feature type="compositionally biased region" description="Polar residues" evidence="5">
    <location>
        <begin position="1"/>
        <end position="25"/>
    </location>
</feature>
<feature type="compositionally biased region" description="Polar residues" evidence="5">
    <location>
        <begin position="83"/>
        <end position="98"/>
    </location>
</feature>
<feature type="compositionally biased region" description="Polar residues" evidence="5">
    <location>
        <begin position="112"/>
        <end position="130"/>
    </location>
</feature>
<feature type="compositionally biased region" description="Polar residues" evidence="5">
    <location>
        <begin position="181"/>
        <end position="191"/>
    </location>
</feature>
<feature type="compositionally biased region" description="Polar residues" evidence="5">
    <location>
        <begin position="218"/>
        <end position="230"/>
    </location>
</feature>
<feature type="compositionally biased region" description="Polar residues" evidence="5">
    <location>
        <begin position="241"/>
        <end position="281"/>
    </location>
</feature>
<feature type="compositionally biased region" description="Low complexity" evidence="5">
    <location>
        <begin position="312"/>
        <end position="323"/>
    </location>
</feature>
<feature type="compositionally biased region" description="Polar residues" evidence="5">
    <location>
        <begin position="340"/>
        <end position="349"/>
    </location>
</feature>
<feature type="compositionally biased region" description="Low complexity" evidence="5">
    <location>
        <begin position="444"/>
        <end position="455"/>
    </location>
</feature>
<feature type="compositionally biased region" description="Low complexity" evidence="5">
    <location>
        <begin position="478"/>
        <end position="487"/>
    </location>
</feature>
<feature type="compositionally biased region" description="Basic and acidic residues" evidence="5">
    <location>
        <begin position="502"/>
        <end position="517"/>
    </location>
</feature>
<feature type="compositionally biased region" description="Basic and acidic residues" evidence="5">
    <location>
        <begin position="530"/>
        <end position="545"/>
    </location>
</feature>
<feature type="modified residue" description="Phosphoserine" evidence="2">
    <location>
        <position position="42"/>
    </location>
</feature>
<feature type="modified residue" description="Phosphoserine" evidence="2">
    <location>
        <position position="63"/>
    </location>
</feature>
<feature type="modified residue" description="Phosphoserine" evidence="2">
    <location>
        <position position="68"/>
    </location>
</feature>
<feature type="modified residue" description="Phosphoserine" evidence="3">
    <location>
        <position position="347"/>
    </location>
</feature>
<feature type="modified residue" description="Phosphoserine" evidence="2">
    <location>
        <position position="490"/>
    </location>
</feature>
<name>ITF2_CANLF</name>
<proteinExistence type="evidence at transcript level"/>
<accession>P15881</accession>
<comment type="function">
    <text evidence="1">Transcription factor that binds to the immunoglobulin enhancer Mu-E5/KE5-motif. Involved in the initiation of neuronal differentiation. Activates transcription by binding to the E box (5'-CANNTG-3') (By similarity). Binds to the thyroglobulin promoter.</text>
</comment>
<comment type="subunit">
    <text evidence="1">Efficient DNA binding requires dimerization with another bHLH protein. Forms homo- or heterooligomers with myogenin. Interacts with HIVEP2. Interacts with NEUROD2 (By similarity). Interacts with AGBL1 (By similarity).</text>
</comment>
<comment type="subcellular location">
    <subcellularLocation>
        <location>Nucleus</location>
    </subcellularLocation>
</comment>
<comment type="tissue specificity">
    <text>Widely expressed.</text>
</comment>
<protein>
    <recommendedName>
        <fullName>Transcription factor 4</fullName>
        <shortName>TCF-4</shortName>
    </recommendedName>
    <alternativeName>
        <fullName>Immunoglobulin transcription factor 2</fullName>
        <shortName>ITF-2</shortName>
    </alternativeName>
    <alternativeName>
        <fullName>Thyroglobulin promoter transcription factor TFE</fullName>
    </alternativeName>
</protein>
<dbReference type="EMBL" id="X51448">
    <property type="protein sequence ID" value="CAA35812.1"/>
    <property type="molecule type" value="mRNA"/>
</dbReference>
<dbReference type="PIR" id="S34416">
    <property type="entry name" value="S34416"/>
</dbReference>
<dbReference type="RefSeq" id="NP_001003268.1">
    <property type="nucleotide sequence ID" value="NM_001003268.1"/>
</dbReference>
<dbReference type="FunCoup" id="P15881">
    <property type="interactions" value="819"/>
</dbReference>
<dbReference type="STRING" id="9615.ENSCAFP00000000209"/>
<dbReference type="PaxDb" id="9612-ENSCAFP00000000209"/>
<dbReference type="GeneID" id="403949"/>
<dbReference type="KEGG" id="cfa:403949"/>
<dbReference type="CTD" id="6925"/>
<dbReference type="eggNOG" id="KOG3910">
    <property type="taxonomic scope" value="Eukaryota"/>
</dbReference>
<dbReference type="InParanoid" id="P15881"/>
<dbReference type="OrthoDB" id="10034090at2759"/>
<dbReference type="Proteomes" id="UP000002254">
    <property type="component" value="Unplaced"/>
</dbReference>
<dbReference type="Proteomes" id="UP000694429">
    <property type="component" value="Unplaced"/>
</dbReference>
<dbReference type="Proteomes" id="UP000694542">
    <property type="component" value="Unplaced"/>
</dbReference>
<dbReference type="Proteomes" id="UP000805418">
    <property type="component" value="Unplaced"/>
</dbReference>
<dbReference type="GO" id="GO:0000785">
    <property type="term" value="C:chromatin"/>
    <property type="evidence" value="ECO:0000318"/>
    <property type="project" value="GO_Central"/>
</dbReference>
<dbReference type="GO" id="GO:0005634">
    <property type="term" value="C:nucleus"/>
    <property type="evidence" value="ECO:0007669"/>
    <property type="project" value="UniProtKB-SubCell"/>
</dbReference>
<dbReference type="GO" id="GO:0005667">
    <property type="term" value="C:transcription regulator complex"/>
    <property type="evidence" value="ECO:0000318"/>
    <property type="project" value="GO_Central"/>
</dbReference>
<dbReference type="GO" id="GO:0000981">
    <property type="term" value="F:DNA-binding transcription factor activity, RNA polymerase II-specific"/>
    <property type="evidence" value="ECO:0000318"/>
    <property type="project" value="GO_Central"/>
</dbReference>
<dbReference type="GO" id="GO:0070888">
    <property type="term" value="F:E-box binding"/>
    <property type="evidence" value="ECO:0000250"/>
    <property type="project" value="UniProtKB"/>
</dbReference>
<dbReference type="GO" id="GO:0046982">
    <property type="term" value="F:protein heterodimerization activity"/>
    <property type="evidence" value="ECO:0000250"/>
    <property type="project" value="UniProtKB"/>
</dbReference>
<dbReference type="GO" id="GO:0000978">
    <property type="term" value="F:RNA polymerase II cis-regulatory region sequence-specific DNA binding"/>
    <property type="evidence" value="ECO:0000318"/>
    <property type="project" value="GO_Central"/>
</dbReference>
<dbReference type="GO" id="GO:0045893">
    <property type="term" value="P:positive regulation of DNA-templated transcription"/>
    <property type="evidence" value="ECO:0007669"/>
    <property type="project" value="UniProtKB-ARBA"/>
</dbReference>
<dbReference type="GO" id="GO:0045666">
    <property type="term" value="P:positive regulation of neuron differentiation"/>
    <property type="evidence" value="ECO:0000250"/>
    <property type="project" value="UniProtKB"/>
</dbReference>
<dbReference type="GO" id="GO:0006357">
    <property type="term" value="P:regulation of transcription by RNA polymerase II"/>
    <property type="evidence" value="ECO:0000318"/>
    <property type="project" value="GO_Central"/>
</dbReference>
<dbReference type="CDD" id="cd18945">
    <property type="entry name" value="bHLH_E-protein_TCF4_E2-2"/>
    <property type="match status" value="1"/>
</dbReference>
<dbReference type="FunFam" id="4.10.280.10:FF:000001">
    <property type="entry name" value="Putative transcription factor 12"/>
    <property type="match status" value="1"/>
</dbReference>
<dbReference type="Gene3D" id="4.10.280.10">
    <property type="entry name" value="Helix-loop-helix DNA-binding domain"/>
    <property type="match status" value="1"/>
</dbReference>
<dbReference type="InterPro" id="IPR011598">
    <property type="entry name" value="bHLH_dom"/>
</dbReference>
<dbReference type="InterPro" id="IPR036638">
    <property type="entry name" value="HLH_DNA-bd_sf"/>
</dbReference>
<dbReference type="InterPro" id="IPR051098">
    <property type="entry name" value="NeuroDiff_E-box_TFs"/>
</dbReference>
<dbReference type="PANTHER" id="PTHR11793">
    <property type="entry name" value="BASIC HELIX-LOOP-HELIX TRANSCRIPTION FACTOR"/>
    <property type="match status" value="1"/>
</dbReference>
<dbReference type="PANTHER" id="PTHR11793:SF10">
    <property type="entry name" value="TRANSCRIPTION FACTOR 4"/>
    <property type="match status" value="1"/>
</dbReference>
<dbReference type="Pfam" id="PF00010">
    <property type="entry name" value="HLH"/>
    <property type="match status" value="1"/>
</dbReference>
<dbReference type="SMART" id="SM00353">
    <property type="entry name" value="HLH"/>
    <property type="match status" value="1"/>
</dbReference>
<dbReference type="SUPFAM" id="SSF47459">
    <property type="entry name" value="HLH, helix-loop-helix DNA-binding domain"/>
    <property type="match status" value="1"/>
</dbReference>
<dbReference type="PROSITE" id="PS50888">
    <property type="entry name" value="BHLH"/>
    <property type="match status" value="1"/>
</dbReference>